<evidence type="ECO:0000255" key="1"/>
<evidence type="ECO:0000256" key="2">
    <source>
        <dbReference type="SAM" id="MobiDB-lite"/>
    </source>
</evidence>
<evidence type="ECO:0000269" key="3">
    <source>
    </source>
</evidence>
<evidence type="ECO:0000269" key="4">
    <source>
    </source>
</evidence>
<evidence type="ECO:0000305" key="5"/>
<organism>
    <name type="scientific">Bombina variegata</name>
    <name type="common">Yellow-bellied toad</name>
    <dbReference type="NCBI Taxonomy" id="8348"/>
    <lineage>
        <taxon>Eukaryota</taxon>
        <taxon>Metazoa</taxon>
        <taxon>Chordata</taxon>
        <taxon>Craniata</taxon>
        <taxon>Vertebrata</taxon>
        <taxon>Euteleostomi</taxon>
        <taxon>Amphibia</taxon>
        <taxon>Batrachia</taxon>
        <taxon>Anura</taxon>
        <taxon>Bombinatoridae</taxon>
        <taxon>Bombina</taxon>
    </lineage>
</organism>
<accession>P29006</accession>
<comment type="function">
    <text>Has antimicrobial activity, but no hemolytic activity. Preliminary evidence indicates that this peptide does not lyse and thus kill the bacteria by its antimicrobial activity.</text>
</comment>
<comment type="function">
    <text>Bombinin H has antibacterial and hemolytic activity.</text>
</comment>
<comment type="subcellular location">
    <subcellularLocation>
        <location>Secreted</location>
    </subcellularLocation>
</comment>
<comment type="tissue specificity">
    <text>Expressed by the skin glands.</text>
</comment>
<comment type="similarity">
    <text evidence="5">Belongs to the bombinin family.</text>
</comment>
<sequence>MNFKYIVAVSILIASAYARSEENDIQSLSQRDVLEEESLREIRGIGGALLSAAKVGLKGLAKGLAEHFANGKRTAEEREVMKRLEAAMRDLDSFEHPEEASEKETRGFNQEEKEKRIIGPVLGLVGSALGGLLKKIG</sequence>
<protein>
    <recommendedName>
        <fullName>Bombinin-like peptides 1</fullName>
    </recommendedName>
    <component>
        <recommendedName>
            <fullName>Acidic peptide 1-1</fullName>
        </recommendedName>
    </component>
    <component>
        <recommendedName>
            <fullName>Bombinin-like peptide 1</fullName>
            <shortName>BLP-1</shortName>
        </recommendedName>
    </component>
    <component>
        <recommendedName>
            <fullName>Octapeptide 1</fullName>
        </recommendedName>
    </component>
    <component>
        <recommendedName>
            <fullName>Acidic peptide 1-2</fullName>
        </recommendedName>
    </component>
    <component>
        <recommendedName>
            <fullName>Bombinin-H</fullName>
        </recommendedName>
    </component>
</protein>
<dbReference type="EMBL" id="X59695">
    <property type="protein sequence ID" value="CAA42216.1"/>
    <property type="molecule type" value="mRNA"/>
</dbReference>
<dbReference type="PIR" id="S16222">
    <property type="entry name" value="S16222"/>
</dbReference>
<dbReference type="BMRB" id="P29006"/>
<dbReference type="SMR" id="P29006"/>
<dbReference type="GO" id="GO:0005576">
    <property type="term" value="C:extracellular region"/>
    <property type="evidence" value="ECO:0007669"/>
    <property type="project" value="UniProtKB-SubCell"/>
</dbReference>
<dbReference type="GO" id="GO:0042742">
    <property type="term" value="P:defense response to bacterium"/>
    <property type="evidence" value="ECO:0007669"/>
    <property type="project" value="UniProtKB-KW"/>
</dbReference>
<dbReference type="GO" id="GO:0031640">
    <property type="term" value="P:killing of cells of another organism"/>
    <property type="evidence" value="ECO:0007669"/>
    <property type="project" value="UniProtKB-KW"/>
</dbReference>
<dbReference type="InterPro" id="IPR007962">
    <property type="entry name" value="Bombinin"/>
</dbReference>
<dbReference type="Pfam" id="PF05298">
    <property type="entry name" value="Bombinin"/>
    <property type="match status" value="1"/>
</dbReference>
<feature type="signal peptide" evidence="1">
    <location>
        <begin position="1"/>
        <end position="18"/>
    </location>
</feature>
<feature type="peptide" id="PRO_0000003067" description="Acidic peptide 1-1" evidence="1">
    <location>
        <begin position="19"/>
        <end position="43"/>
    </location>
</feature>
<feature type="peptide" id="PRO_0000003068" description="Bombinin-like peptide 1">
    <location>
        <begin position="44"/>
        <end position="70"/>
    </location>
</feature>
<feature type="peptide" id="PRO_0000003069" description="Octapeptide 1" evidence="1">
    <location>
        <begin position="74"/>
        <end position="81"/>
    </location>
</feature>
<feature type="peptide" id="PRO_0000003070" description="Acidic peptide 1-2" evidence="1">
    <location>
        <begin position="84"/>
        <end position="114"/>
    </location>
</feature>
<feature type="peptide" id="PRO_0000003071" description="Bombinin-H">
    <location>
        <begin position="117"/>
        <end position="136"/>
    </location>
</feature>
<feature type="region of interest" description="Disordered" evidence="2">
    <location>
        <begin position="91"/>
        <end position="112"/>
    </location>
</feature>
<feature type="modified residue" description="Asparagine amide" evidence="3">
    <location>
        <position position="70"/>
    </location>
</feature>
<feature type="modified residue" description="D-allo-isoleucine" evidence="4">
    <location>
        <position position="118"/>
    </location>
</feature>
<feature type="modified residue" description="Isoleucine amide" evidence="4">
    <location>
        <position position="136"/>
    </location>
</feature>
<feature type="sequence variant">
    <original>I</original>
    <variation>L</variation>
    <location>
        <position position="117"/>
    </location>
</feature>
<feature type="sequence variant">
    <original>L</original>
    <variation>M</variation>
    <location>
        <position position="124"/>
    </location>
</feature>
<reference key="1">
    <citation type="journal article" date="1991" name="Eur. J. Biochem.">
        <title>A family of bombinin-related peptides from the skin of Bombina variegata.</title>
        <authorList>
            <person name="Simmaco M."/>
            <person name="Barra D."/>
            <person name="Chiarini F."/>
            <person name="Noviello L."/>
            <person name="Melchiorri P."/>
            <person name="Kreil G."/>
            <person name="Richter K."/>
        </authorList>
    </citation>
    <scope>NUCLEOTIDE SEQUENCE [MRNA]</scope>
    <scope>AMIDATION AT ASN-70</scope>
    <scope>PRELIMINARY PROTEIN SEQUENCE OF 44-69</scope>
    <source>
        <tissue>Skin</tissue>
        <tissue>Skin secretion</tissue>
    </source>
</reference>
<reference key="2">
    <citation type="journal article" date="1993" name="EMBO J.">
        <title>Antibacterial and haemolytic peptides containing D-alloisoleucine from the skin of Bombina variegata.</title>
        <authorList>
            <person name="Mignogna G."/>
            <person name="Simmaco M."/>
            <person name="Kreil G."/>
            <person name="Barra D."/>
        </authorList>
    </citation>
    <scope>PROTEIN SEQUENCE OF 117-136</scope>
    <scope>D-AMINO ACID AT ILE-118</scope>
    <scope>AMIDATION AT ILE-136</scope>
    <source>
        <tissue>Skin secretion</tissue>
    </source>
</reference>
<proteinExistence type="evidence at protein level"/>
<keyword id="KW-0027">Amidation</keyword>
<keyword id="KW-0878">Amphibian defense peptide</keyword>
<keyword id="KW-0044">Antibiotic</keyword>
<keyword id="KW-0929">Antimicrobial</keyword>
<keyword id="KW-0165">Cleavage on pair of basic residues</keyword>
<keyword id="KW-0204">Cytolysis</keyword>
<keyword id="KW-0208">D-amino acid</keyword>
<keyword id="KW-0903">Direct protein sequencing</keyword>
<keyword id="KW-0354">Hemolysis</keyword>
<keyword id="KW-0964">Secreted</keyword>
<keyword id="KW-0732">Signal</keyword>
<name>BMNL1_BOMVA</name>